<proteinExistence type="inferred from homology"/>
<evidence type="ECO:0000255" key="1">
    <source>
        <dbReference type="HAMAP-Rule" id="MF_00787"/>
    </source>
</evidence>
<accession>Q8TYG5</accession>
<reference key="1">
    <citation type="journal article" date="2002" name="Proc. Natl. Acad. Sci. U.S.A.">
        <title>The complete genome of hyperthermophile Methanopyrus kandleri AV19 and monophyly of archaeal methanogens.</title>
        <authorList>
            <person name="Slesarev A.I."/>
            <person name="Mezhevaya K.V."/>
            <person name="Makarova K.S."/>
            <person name="Polushin N.N."/>
            <person name="Shcherbinina O.V."/>
            <person name="Shakhova V.V."/>
            <person name="Belova G.I."/>
            <person name="Aravind L."/>
            <person name="Natale D.A."/>
            <person name="Rogozin I.B."/>
            <person name="Tatusov R.L."/>
            <person name="Wolf Y.I."/>
            <person name="Stetter K.O."/>
            <person name="Malykh A.G."/>
            <person name="Koonin E.V."/>
            <person name="Kozyavkin S.A."/>
        </authorList>
    </citation>
    <scope>NUCLEOTIDE SEQUENCE [LARGE SCALE GENOMIC DNA]</scope>
    <source>
        <strain>AV19 / DSM 6324 / JCM 9639 / NBRC 100938</strain>
    </source>
</reference>
<comment type="function">
    <text evidence="1">Catalyzes the methylation of C-1 in cobalt-precorrin-5B to form cobalt-precorrin-6A.</text>
</comment>
<comment type="catalytic activity">
    <reaction evidence="1">
        <text>Co-precorrin-5B + S-adenosyl-L-methionine = Co-precorrin-6A + S-adenosyl-L-homocysteine</text>
        <dbReference type="Rhea" id="RHEA:26285"/>
        <dbReference type="ChEBI" id="CHEBI:57856"/>
        <dbReference type="ChEBI" id="CHEBI:59789"/>
        <dbReference type="ChEBI" id="CHEBI:60063"/>
        <dbReference type="ChEBI" id="CHEBI:60064"/>
        <dbReference type="EC" id="2.1.1.195"/>
    </reaction>
</comment>
<comment type="pathway">
    <text evidence="1">Cofactor biosynthesis; adenosylcobalamin biosynthesis; cob(II)yrinate a,c-diamide from sirohydrochlorin (anaerobic route): step 6/10.</text>
</comment>
<comment type="similarity">
    <text evidence="1">Belongs to the CbiD family.</text>
</comment>
<feature type="chain" id="PRO_0000141693" description="Cobalt-precorrin-5B C(1)-methyltransferase">
    <location>
        <begin position="1"/>
        <end position="409"/>
    </location>
</feature>
<sequence length="409" mass="44576">MNDLLDPIRGIPVDLELVRRELDVDLPTARYLVRTGLITTDGARVLRRGPTTGTCATAAAKAAAIRLLEGRTVRTVRVRLPVGTVIGVRISRVGGDPSEARVRKPGSDDHVDVTTGVTIAARVEETGSEGVEIRAGRGVGETPSGKPAISEAVREQIVDNLRYLVDSYGVGLRVTIEVPDGEEIARKTLAHRHGIEGGISILGTKGLVDPNSEEAIEGSIRSDLRYVERVPCLVTGYRTMDRARRLGIPSRDIVNCHGRYDLALEAVKTGVPADGEVKRFDAVLIFGMPGKLLKLAAGAYNTHAKVADARRESLVTRLVEIGRPDLAVEAARHEGLISEFLRSLDPDVRRELFERVCELVEERVSSDHDLECGCALYFRADDSEEVVEGEGWKRLVRGYDDDLIGRPKG</sequence>
<name>CBID_METKA</name>
<organism>
    <name type="scientific">Methanopyrus kandleri (strain AV19 / DSM 6324 / JCM 9639 / NBRC 100938)</name>
    <dbReference type="NCBI Taxonomy" id="190192"/>
    <lineage>
        <taxon>Archaea</taxon>
        <taxon>Methanobacteriati</taxon>
        <taxon>Methanobacteriota</taxon>
        <taxon>Methanomada group</taxon>
        <taxon>Methanopyri</taxon>
        <taxon>Methanopyrales</taxon>
        <taxon>Methanopyraceae</taxon>
        <taxon>Methanopyrus</taxon>
    </lineage>
</organism>
<gene>
    <name evidence="1" type="primary">cbiD</name>
    <name type="ordered locus">MK0334</name>
</gene>
<protein>
    <recommendedName>
        <fullName evidence="1">Cobalt-precorrin-5B C(1)-methyltransferase</fullName>
        <ecNumber evidence="1">2.1.1.195</ecNumber>
    </recommendedName>
    <alternativeName>
        <fullName evidence="1">Cobalt-precorrin-6A synthase</fullName>
    </alternativeName>
</protein>
<keyword id="KW-0169">Cobalamin biosynthesis</keyword>
<keyword id="KW-0489">Methyltransferase</keyword>
<keyword id="KW-1185">Reference proteome</keyword>
<keyword id="KW-0949">S-adenosyl-L-methionine</keyword>
<keyword id="KW-0808">Transferase</keyword>
<dbReference type="EC" id="2.1.1.195" evidence="1"/>
<dbReference type="EMBL" id="AE009439">
    <property type="protein sequence ID" value="AAM01549.1"/>
    <property type="molecule type" value="Genomic_DNA"/>
</dbReference>
<dbReference type="RefSeq" id="WP_011018704.1">
    <property type="nucleotide sequence ID" value="NC_003551.1"/>
</dbReference>
<dbReference type="SMR" id="Q8TYG5"/>
<dbReference type="FunCoup" id="Q8TYG5">
    <property type="interactions" value="84"/>
</dbReference>
<dbReference type="STRING" id="190192.MK0334"/>
<dbReference type="PaxDb" id="190192-MK0334"/>
<dbReference type="EnsemblBacteria" id="AAM01549">
    <property type="protein sequence ID" value="AAM01549"/>
    <property type="gene ID" value="MK0334"/>
</dbReference>
<dbReference type="GeneID" id="1477637"/>
<dbReference type="KEGG" id="mka:MK0334"/>
<dbReference type="PATRIC" id="fig|190192.8.peg.355"/>
<dbReference type="HOGENOM" id="CLU_041273_1_0_2"/>
<dbReference type="InParanoid" id="Q8TYG5"/>
<dbReference type="OrthoDB" id="10423at2157"/>
<dbReference type="UniPathway" id="UPA00148">
    <property type="reaction ID" value="UER00227"/>
</dbReference>
<dbReference type="Proteomes" id="UP000001826">
    <property type="component" value="Chromosome"/>
</dbReference>
<dbReference type="GO" id="GO:0043780">
    <property type="term" value="F:cobalt-precorrin-5B C1-methyltransferase activity"/>
    <property type="evidence" value="ECO:0007669"/>
    <property type="project" value="RHEA"/>
</dbReference>
<dbReference type="GO" id="GO:0019251">
    <property type="term" value="P:anaerobic cobalamin biosynthetic process"/>
    <property type="evidence" value="ECO:0007669"/>
    <property type="project" value="UniProtKB-UniRule"/>
</dbReference>
<dbReference type="GO" id="GO:0032259">
    <property type="term" value="P:methylation"/>
    <property type="evidence" value="ECO:0007669"/>
    <property type="project" value="UniProtKB-KW"/>
</dbReference>
<dbReference type="Gene3D" id="3.30.2110.10">
    <property type="entry name" value="CbiD-like"/>
    <property type="match status" value="1"/>
</dbReference>
<dbReference type="HAMAP" id="MF_00787">
    <property type="entry name" value="CbiD"/>
    <property type="match status" value="1"/>
</dbReference>
<dbReference type="InterPro" id="IPR002748">
    <property type="entry name" value="CbiD"/>
</dbReference>
<dbReference type="InterPro" id="IPR036074">
    <property type="entry name" value="CbiD_sf"/>
</dbReference>
<dbReference type="NCBIfam" id="TIGR00312">
    <property type="entry name" value="cbiD"/>
    <property type="match status" value="1"/>
</dbReference>
<dbReference type="PANTHER" id="PTHR35863">
    <property type="entry name" value="COBALT-PRECORRIN-5B C(1)-METHYLTRANSFERASE"/>
    <property type="match status" value="1"/>
</dbReference>
<dbReference type="PANTHER" id="PTHR35863:SF1">
    <property type="entry name" value="COBALT-PRECORRIN-5B C(1)-METHYLTRANSFERASE"/>
    <property type="match status" value="1"/>
</dbReference>
<dbReference type="Pfam" id="PF01888">
    <property type="entry name" value="CbiD"/>
    <property type="match status" value="1"/>
</dbReference>
<dbReference type="PIRSF" id="PIRSF026782">
    <property type="entry name" value="CbiD"/>
    <property type="match status" value="1"/>
</dbReference>
<dbReference type="SUPFAM" id="SSF111342">
    <property type="entry name" value="CbiD-like"/>
    <property type="match status" value="1"/>
</dbReference>